<protein>
    <recommendedName>
        <fullName evidence="1">2-isopropylmalate synthase</fullName>
        <ecNumber evidence="1">2.3.3.13</ecNumber>
    </recommendedName>
    <alternativeName>
        <fullName evidence="1">Alpha-IPM synthase</fullName>
    </alternativeName>
    <alternativeName>
        <fullName evidence="1">Alpha-isopropylmalate synthase</fullName>
    </alternativeName>
</protein>
<dbReference type="EC" id="2.3.3.13" evidence="1"/>
<dbReference type="EMBL" id="CP000140">
    <property type="protein sequence ID" value="ABR43795.1"/>
    <property type="molecule type" value="Genomic_DNA"/>
</dbReference>
<dbReference type="RefSeq" id="WP_011966677.1">
    <property type="nucleotide sequence ID" value="NC_009615.1"/>
</dbReference>
<dbReference type="SMR" id="A6LDN1"/>
<dbReference type="STRING" id="435591.BDI_2064"/>
<dbReference type="PaxDb" id="435591-BDI_2064"/>
<dbReference type="KEGG" id="pdi:BDI_2064"/>
<dbReference type="PATRIC" id="fig|435591.13.peg.2048"/>
<dbReference type="eggNOG" id="COG0119">
    <property type="taxonomic scope" value="Bacteria"/>
</dbReference>
<dbReference type="HOGENOM" id="CLU_022158_0_1_10"/>
<dbReference type="BioCyc" id="PDIS435591:G1G5A-2117-MONOMER"/>
<dbReference type="UniPathway" id="UPA00048">
    <property type="reaction ID" value="UER00070"/>
</dbReference>
<dbReference type="Proteomes" id="UP000000566">
    <property type="component" value="Chromosome"/>
</dbReference>
<dbReference type="GO" id="GO:0005737">
    <property type="term" value="C:cytoplasm"/>
    <property type="evidence" value="ECO:0007669"/>
    <property type="project" value="UniProtKB-SubCell"/>
</dbReference>
<dbReference type="GO" id="GO:0003852">
    <property type="term" value="F:2-isopropylmalate synthase activity"/>
    <property type="evidence" value="ECO:0007669"/>
    <property type="project" value="UniProtKB-UniRule"/>
</dbReference>
<dbReference type="GO" id="GO:0003985">
    <property type="term" value="F:acetyl-CoA C-acetyltransferase activity"/>
    <property type="evidence" value="ECO:0007669"/>
    <property type="project" value="UniProtKB-UniRule"/>
</dbReference>
<dbReference type="GO" id="GO:0030145">
    <property type="term" value="F:manganese ion binding"/>
    <property type="evidence" value="ECO:0007669"/>
    <property type="project" value="UniProtKB-UniRule"/>
</dbReference>
<dbReference type="GO" id="GO:0009098">
    <property type="term" value="P:L-leucine biosynthetic process"/>
    <property type="evidence" value="ECO:0007669"/>
    <property type="project" value="UniProtKB-UniRule"/>
</dbReference>
<dbReference type="CDD" id="cd07940">
    <property type="entry name" value="DRE_TIM_IPMS"/>
    <property type="match status" value="1"/>
</dbReference>
<dbReference type="FunFam" id="1.10.238.260:FF:000001">
    <property type="entry name" value="2-isopropylmalate synthase"/>
    <property type="match status" value="1"/>
</dbReference>
<dbReference type="FunFam" id="3.20.20.70:FF:000010">
    <property type="entry name" value="2-isopropylmalate synthase"/>
    <property type="match status" value="1"/>
</dbReference>
<dbReference type="Gene3D" id="1.10.238.260">
    <property type="match status" value="1"/>
</dbReference>
<dbReference type="Gene3D" id="3.30.160.270">
    <property type="match status" value="1"/>
</dbReference>
<dbReference type="Gene3D" id="3.20.20.70">
    <property type="entry name" value="Aldolase class I"/>
    <property type="match status" value="1"/>
</dbReference>
<dbReference type="HAMAP" id="MF_01025">
    <property type="entry name" value="LeuA_type1"/>
    <property type="match status" value="1"/>
</dbReference>
<dbReference type="InterPro" id="IPR050073">
    <property type="entry name" value="2-IPM_HCS-like"/>
</dbReference>
<dbReference type="InterPro" id="IPR013709">
    <property type="entry name" value="2-isopropylmalate_synth_dimer"/>
</dbReference>
<dbReference type="InterPro" id="IPR002034">
    <property type="entry name" value="AIPM/Hcit_synth_CS"/>
</dbReference>
<dbReference type="InterPro" id="IPR013785">
    <property type="entry name" value="Aldolase_TIM"/>
</dbReference>
<dbReference type="InterPro" id="IPR054691">
    <property type="entry name" value="LeuA/HCS_post-cat"/>
</dbReference>
<dbReference type="InterPro" id="IPR036230">
    <property type="entry name" value="LeuA_allosteric_dom_sf"/>
</dbReference>
<dbReference type="InterPro" id="IPR005671">
    <property type="entry name" value="LeuA_bact_synth"/>
</dbReference>
<dbReference type="InterPro" id="IPR000891">
    <property type="entry name" value="PYR_CT"/>
</dbReference>
<dbReference type="NCBIfam" id="TIGR00973">
    <property type="entry name" value="leuA_bact"/>
    <property type="match status" value="1"/>
</dbReference>
<dbReference type="NCBIfam" id="NF002086">
    <property type="entry name" value="PRK00915.1-3"/>
    <property type="match status" value="1"/>
</dbReference>
<dbReference type="PANTHER" id="PTHR10277:SF9">
    <property type="entry name" value="2-ISOPROPYLMALATE SYNTHASE 1, CHLOROPLASTIC-RELATED"/>
    <property type="match status" value="1"/>
</dbReference>
<dbReference type="PANTHER" id="PTHR10277">
    <property type="entry name" value="HOMOCITRATE SYNTHASE-RELATED"/>
    <property type="match status" value="1"/>
</dbReference>
<dbReference type="Pfam" id="PF22617">
    <property type="entry name" value="HCS_D2"/>
    <property type="match status" value="1"/>
</dbReference>
<dbReference type="Pfam" id="PF00682">
    <property type="entry name" value="HMGL-like"/>
    <property type="match status" value="1"/>
</dbReference>
<dbReference type="Pfam" id="PF08502">
    <property type="entry name" value="LeuA_dimer"/>
    <property type="match status" value="1"/>
</dbReference>
<dbReference type="SMART" id="SM00917">
    <property type="entry name" value="LeuA_dimer"/>
    <property type="match status" value="1"/>
</dbReference>
<dbReference type="SUPFAM" id="SSF110921">
    <property type="entry name" value="2-isopropylmalate synthase LeuA, allosteric (dimerisation) domain"/>
    <property type="match status" value="1"/>
</dbReference>
<dbReference type="SUPFAM" id="SSF51569">
    <property type="entry name" value="Aldolase"/>
    <property type="match status" value="1"/>
</dbReference>
<dbReference type="PROSITE" id="PS00815">
    <property type="entry name" value="AIPM_HOMOCIT_SYNTH_1"/>
    <property type="match status" value="1"/>
</dbReference>
<dbReference type="PROSITE" id="PS00816">
    <property type="entry name" value="AIPM_HOMOCIT_SYNTH_2"/>
    <property type="match status" value="1"/>
</dbReference>
<dbReference type="PROSITE" id="PS50991">
    <property type="entry name" value="PYR_CT"/>
    <property type="match status" value="1"/>
</dbReference>
<accession>A6LDN1</accession>
<reference key="1">
    <citation type="journal article" date="2007" name="PLoS Biol.">
        <title>Evolution of symbiotic bacteria in the distal human intestine.</title>
        <authorList>
            <person name="Xu J."/>
            <person name="Mahowald M.A."/>
            <person name="Ley R.E."/>
            <person name="Lozupone C.A."/>
            <person name="Hamady M."/>
            <person name="Martens E.C."/>
            <person name="Henrissat B."/>
            <person name="Coutinho P.M."/>
            <person name="Minx P."/>
            <person name="Latreille P."/>
            <person name="Cordum H."/>
            <person name="Van Brunt A."/>
            <person name="Kim K."/>
            <person name="Fulton R.S."/>
            <person name="Fulton L.A."/>
            <person name="Clifton S.W."/>
            <person name="Wilson R.K."/>
            <person name="Knight R.D."/>
            <person name="Gordon J.I."/>
        </authorList>
    </citation>
    <scope>NUCLEOTIDE SEQUENCE [LARGE SCALE GENOMIC DNA]</scope>
    <source>
        <strain>ATCC 8503 / DSM 20701 / CIP 104284 / JCM 5825 / NCTC 11152</strain>
    </source>
</reference>
<feature type="chain" id="PRO_0000406897" description="2-isopropylmalate synthase">
    <location>
        <begin position="1"/>
        <end position="500"/>
    </location>
</feature>
<feature type="domain" description="Pyruvate carboxyltransferase" evidence="1">
    <location>
        <begin position="5"/>
        <end position="266"/>
    </location>
</feature>
<feature type="region of interest" description="Regulatory domain" evidence="1">
    <location>
        <begin position="389"/>
        <end position="500"/>
    </location>
</feature>
<feature type="binding site" evidence="1">
    <location>
        <position position="14"/>
    </location>
    <ligand>
        <name>Mn(2+)</name>
        <dbReference type="ChEBI" id="CHEBI:29035"/>
    </ligand>
</feature>
<feature type="binding site" evidence="1">
    <location>
        <position position="202"/>
    </location>
    <ligand>
        <name>Mn(2+)</name>
        <dbReference type="ChEBI" id="CHEBI:29035"/>
    </ligand>
</feature>
<feature type="binding site" evidence="1">
    <location>
        <position position="204"/>
    </location>
    <ligand>
        <name>Mn(2+)</name>
        <dbReference type="ChEBI" id="CHEBI:29035"/>
    </ligand>
</feature>
<feature type="binding site" evidence="1">
    <location>
        <position position="238"/>
    </location>
    <ligand>
        <name>Mn(2+)</name>
        <dbReference type="ChEBI" id="CHEBI:29035"/>
    </ligand>
</feature>
<name>LEU1_PARD8</name>
<proteinExistence type="inferred from homology"/>
<evidence type="ECO:0000255" key="1">
    <source>
        <dbReference type="HAMAP-Rule" id="MF_01025"/>
    </source>
</evidence>
<organism>
    <name type="scientific">Parabacteroides distasonis (strain ATCC 8503 / DSM 20701 / CIP 104284 / JCM 5825 / NCTC 11152)</name>
    <dbReference type="NCBI Taxonomy" id="435591"/>
    <lineage>
        <taxon>Bacteria</taxon>
        <taxon>Pseudomonadati</taxon>
        <taxon>Bacteroidota</taxon>
        <taxon>Bacteroidia</taxon>
        <taxon>Bacteroidales</taxon>
        <taxon>Tannerellaceae</taxon>
        <taxon>Parabacteroides</taxon>
    </lineage>
</organism>
<gene>
    <name evidence="1" type="primary">leuA</name>
    <name type="ordered locus">BDI_2064</name>
</gene>
<comment type="function">
    <text evidence="1">Catalyzes the condensation of the acetyl group of acetyl-CoA with 3-methyl-2-oxobutanoate (2-ketoisovalerate) to form 3-carboxy-3-hydroxy-4-methylpentanoate (2-isopropylmalate).</text>
</comment>
<comment type="catalytic activity">
    <reaction evidence="1">
        <text>3-methyl-2-oxobutanoate + acetyl-CoA + H2O = (2S)-2-isopropylmalate + CoA + H(+)</text>
        <dbReference type="Rhea" id="RHEA:21524"/>
        <dbReference type="ChEBI" id="CHEBI:1178"/>
        <dbReference type="ChEBI" id="CHEBI:11851"/>
        <dbReference type="ChEBI" id="CHEBI:15377"/>
        <dbReference type="ChEBI" id="CHEBI:15378"/>
        <dbReference type="ChEBI" id="CHEBI:57287"/>
        <dbReference type="ChEBI" id="CHEBI:57288"/>
        <dbReference type="EC" id="2.3.3.13"/>
    </reaction>
</comment>
<comment type="cofactor">
    <cofactor evidence="1">
        <name>Mn(2+)</name>
        <dbReference type="ChEBI" id="CHEBI:29035"/>
    </cofactor>
</comment>
<comment type="pathway">
    <text evidence="1">Amino-acid biosynthesis; L-leucine biosynthesis; L-leucine from 3-methyl-2-oxobutanoate: step 1/4.</text>
</comment>
<comment type="subunit">
    <text evidence="1">Homodimer.</text>
</comment>
<comment type="subcellular location">
    <subcellularLocation>
        <location evidence="1">Cytoplasm</location>
    </subcellularLocation>
</comment>
<comment type="similarity">
    <text evidence="1">Belongs to the alpha-IPM synthase/homocitrate synthase family. LeuA type 1 subfamily.</text>
</comment>
<sequence length="500" mass="54632">MSDRLFIFDTTLRDGEQVPGCQLNTVEKIQVAKALEQLGVDVIEAGFPVSSPGDFKSVVEISKAVTWPTICALTRAVEKDIDVAAEALRFAKRGRIHTGIGTSDSHIKYKFNSTREEIIERAIAATKYAKKYVEDVEFYCEDAGRTDNEYLARVVEAVIKAGATVVNIPDTTGYCLPDEYGAKIKYLMEHVDGVHNAILSTHCHNDLGMATANTVQGVLNGARQVEVTINGIGERAGNTSLEEVAMVFKSHKERDIITNITTNKIYSTSRMVSSLMNMPVQPNKAIVGRNAFAHSSGIHQDGVLKNAQTYEIIDPKDVGIDDNAIVLTARSGRAALKHRLHVLGVDLEQEKLDKVYDEFLKLADRKKDINDDDVLMLVGKDRTATHRIKLEYLQVTSGVGVQSVASICLNLSGVRRYEAAAGNGPVDAGIKAVKKAISNSDMTIQEFLIQAINKGSDDTGKVHMQVEYNGATYYGFSANTDIIAASVEAFVDAINKFIVD</sequence>
<keyword id="KW-0028">Amino-acid biosynthesis</keyword>
<keyword id="KW-0100">Branched-chain amino acid biosynthesis</keyword>
<keyword id="KW-0963">Cytoplasm</keyword>
<keyword id="KW-0432">Leucine biosynthesis</keyword>
<keyword id="KW-0464">Manganese</keyword>
<keyword id="KW-0479">Metal-binding</keyword>
<keyword id="KW-1185">Reference proteome</keyword>
<keyword id="KW-0808">Transferase</keyword>